<feature type="chain" id="PRO_0000197760" description="Blue-sensitive opsin P467">
    <location>
        <begin position="1"/>
        <end position="355"/>
    </location>
</feature>
<feature type="topological domain" description="Extracellular">
    <location>
        <begin position="1"/>
        <end position="36"/>
    </location>
</feature>
<feature type="transmembrane region" description="Helical; Name=1" evidence="2">
    <location>
        <begin position="37"/>
        <end position="61"/>
    </location>
</feature>
<feature type="topological domain" description="Cytoplasmic">
    <location>
        <begin position="62"/>
        <end position="73"/>
    </location>
</feature>
<feature type="transmembrane region" description="Helical; Name=2" evidence="2">
    <location>
        <begin position="74"/>
        <end position="98"/>
    </location>
</feature>
<feature type="topological domain" description="Extracellular">
    <location>
        <begin position="99"/>
        <end position="113"/>
    </location>
</feature>
<feature type="transmembrane region" description="Helical; Name=3" evidence="2">
    <location>
        <begin position="114"/>
        <end position="133"/>
    </location>
</feature>
<feature type="topological domain" description="Cytoplasmic">
    <location>
        <begin position="134"/>
        <end position="152"/>
    </location>
</feature>
<feature type="transmembrane region" description="Helical; Name=4" evidence="2">
    <location>
        <begin position="153"/>
        <end position="176"/>
    </location>
</feature>
<feature type="topological domain" description="Extracellular">
    <location>
        <begin position="177"/>
        <end position="202"/>
    </location>
</feature>
<feature type="transmembrane region" description="Helical; Name=5" evidence="2">
    <location>
        <begin position="203"/>
        <end position="230"/>
    </location>
</feature>
<feature type="topological domain" description="Cytoplasmic">
    <location>
        <begin position="231"/>
        <end position="252"/>
    </location>
</feature>
<feature type="transmembrane region" description="Helical; Name=6" evidence="2">
    <location>
        <begin position="253"/>
        <end position="276"/>
    </location>
</feature>
<feature type="topological domain" description="Extracellular">
    <location>
        <begin position="277"/>
        <end position="284"/>
    </location>
</feature>
<feature type="transmembrane region" description="Helical; Name=7" evidence="2">
    <location>
        <begin position="285"/>
        <end position="309"/>
    </location>
</feature>
<feature type="topological domain" description="Cytoplasmic">
    <location>
        <begin position="310"/>
        <end position="355"/>
    </location>
</feature>
<feature type="region of interest" description="Disordered" evidence="4">
    <location>
        <begin position="333"/>
        <end position="355"/>
    </location>
</feature>
<feature type="compositionally biased region" description="Low complexity" evidence="4">
    <location>
        <begin position="334"/>
        <end position="355"/>
    </location>
</feature>
<feature type="modified residue" description="N6-(retinylidene)lysine" evidence="1">
    <location>
        <position position="296"/>
    </location>
</feature>
<feature type="glycosylation site" description="N-linked (GlcNAc...) asparagine" evidence="2">
    <location>
        <position position="2"/>
    </location>
</feature>
<feature type="glycosylation site" description="N-linked (GlcNAc...) asparagine" evidence="2">
    <location>
        <position position="15"/>
    </location>
</feature>
<feature type="glycosylation site" description="N-linked (GlcNAc...) asparagine" evidence="2">
    <location>
        <position position="200"/>
    </location>
</feature>
<feature type="disulfide bond" evidence="3">
    <location>
        <begin position="110"/>
        <end position="187"/>
    </location>
</feature>
<accession>P35357</accession>
<name>OPSB_GEKGE</name>
<protein>
    <recommendedName>
        <fullName>Blue-sensitive opsin P467</fullName>
    </recommendedName>
    <alternativeName>
        <fullName>Blue photoreceptor pigment</fullName>
    </alternativeName>
</protein>
<proteinExistence type="evidence at protein level"/>
<sequence length="355" mass="39688">MNGTEGINFYVPLSNKTGLVRSPFEYPQYYLADPWKFKVLSFYMFFLIAAGMPLNGLTLFVTFQHKKLRQPLNYILVNLAAANLVTVCCGFTVTFYASWYAYFVFGPIGCAIEGFFATIGGQVALWSLVVLAIERYIVICKPMGNFRFSATHAIMGIAFTWFMALACAGPPLFGWSRFIPEGMQCSCGPDYYTLNPDFHNESYVIYMFIVHFTVPMVVIFFSYGRLVCKVREAAAQQQESATTQKAEKEVTRMVILMVLGFLLAWTPYAATAIWIFTNRGAAFSVTFMTIPAFFSKSSSIYNPIIYVLLNKQFRNCMVTTICCGKNPFGDEDVSSSVSQSKTEVSSVSSSQVAPA</sequence>
<dbReference type="EMBL" id="M92035">
    <property type="protein sequence ID" value="AAA49307.1"/>
    <property type="molecule type" value="mRNA"/>
</dbReference>
<dbReference type="PIR" id="A46191">
    <property type="entry name" value="A46191"/>
</dbReference>
<dbReference type="SMR" id="P35357"/>
<dbReference type="GO" id="GO:0016020">
    <property type="term" value="C:membrane"/>
    <property type="evidence" value="ECO:0007669"/>
    <property type="project" value="UniProtKB-SubCell"/>
</dbReference>
<dbReference type="GO" id="GO:0004930">
    <property type="term" value="F:G protein-coupled receptor activity"/>
    <property type="evidence" value="ECO:0007669"/>
    <property type="project" value="UniProtKB-KW"/>
</dbReference>
<dbReference type="GO" id="GO:0009881">
    <property type="term" value="F:photoreceptor activity"/>
    <property type="evidence" value="ECO:0007669"/>
    <property type="project" value="UniProtKB-KW"/>
</dbReference>
<dbReference type="GO" id="GO:0007602">
    <property type="term" value="P:phototransduction"/>
    <property type="evidence" value="ECO:0007669"/>
    <property type="project" value="UniProtKB-KW"/>
</dbReference>
<dbReference type="GO" id="GO:0007601">
    <property type="term" value="P:visual perception"/>
    <property type="evidence" value="ECO:0007669"/>
    <property type="project" value="UniProtKB-KW"/>
</dbReference>
<dbReference type="FunFam" id="1.20.1070.10:FF:000018">
    <property type="entry name" value="Rhodopsin"/>
    <property type="match status" value="1"/>
</dbReference>
<dbReference type="Gene3D" id="1.20.1070.10">
    <property type="entry name" value="Rhodopsin 7-helix transmembrane proteins"/>
    <property type="match status" value="1"/>
</dbReference>
<dbReference type="InterPro" id="IPR050125">
    <property type="entry name" value="GPCR_opsins"/>
</dbReference>
<dbReference type="InterPro" id="IPR000276">
    <property type="entry name" value="GPCR_Rhodpsn"/>
</dbReference>
<dbReference type="InterPro" id="IPR017452">
    <property type="entry name" value="GPCR_Rhodpsn_7TM"/>
</dbReference>
<dbReference type="InterPro" id="IPR001760">
    <property type="entry name" value="Opsin"/>
</dbReference>
<dbReference type="InterPro" id="IPR027430">
    <property type="entry name" value="Retinal_BS"/>
</dbReference>
<dbReference type="InterPro" id="IPR000732">
    <property type="entry name" value="Rhodopsin"/>
</dbReference>
<dbReference type="InterPro" id="IPR019477">
    <property type="entry name" value="Rhodopsin_N"/>
</dbReference>
<dbReference type="PANTHER" id="PTHR24240">
    <property type="entry name" value="OPSIN"/>
    <property type="match status" value="1"/>
</dbReference>
<dbReference type="Pfam" id="PF00001">
    <property type="entry name" value="7tm_1"/>
    <property type="match status" value="1"/>
</dbReference>
<dbReference type="Pfam" id="PF10413">
    <property type="entry name" value="Rhodopsin_N"/>
    <property type="match status" value="1"/>
</dbReference>
<dbReference type="PRINTS" id="PR00237">
    <property type="entry name" value="GPCRRHODOPSN"/>
</dbReference>
<dbReference type="PRINTS" id="PR00238">
    <property type="entry name" value="OPSIN"/>
</dbReference>
<dbReference type="PRINTS" id="PR00579">
    <property type="entry name" value="RHODOPSIN"/>
</dbReference>
<dbReference type="SUPFAM" id="SSF81321">
    <property type="entry name" value="Family A G protein-coupled receptor-like"/>
    <property type="match status" value="1"/>
</dbReference>
<dbReference type="PROSITE" id="PS00237">
    <property type="entry name" value="G_PROTEIN_RECEP_F1_1"/>
    <property type="match status" value="1"/>
</dbReference>
<dbReference type="PROSITE" id="PS50262">
    <property type="entry name" value="G_PROTEIN_RECEP_F1_2"/>
    <property type="match status" value="1"/>
</dbReference>
<dbReference type="PROSITE" id="PS00238">
    <property type="entry name" value="OPSIN"/>
    <property type="match status" value="1"/>
</dbReference>
<comment type="function">
    <text>Visual pigments are the light-absorbing molecules that mediate vision. They consist of an apoprotein, opsin, covalently linked to cis-retinal.</text>
</comment>
<comment type="biophysicochemical properties">
    <absorption>
        <max>467 nm</max>
    </absorption>
</comment>
<comment type="subcellular location">
    <subcellularLocation>
        <location>Membrane</location>
        <topology>Multi-pass membrane protein</topology>
    </subcellularLocation>
</comment>
<comment type="tissue specificity">
    <text>In this lizard the color pigments are found in the rod-shaped photoreceptor cells which have been derived from ancestral cone-like photoreceptors.</text>
</comment>
<comment type="PTM">
    <text evidence="1">Phosphorylated on some or all of the serine and threonine residues present in the C-terminal region.</text>
</comment>
<comment type="similarity">
    <text evidence="3">Belongs to the G-protein coupled receptor 1 family. Opsin subfamily.</text>
</comment>
<keyword id="KW-0157">Chromophore</keyword>
<keyword id="KW-1015">Disulfide bond</keyword>
<keyword id="KW-0297">G-protein coupled receptor</keyword>
<keyword id="KW-0325">Glycoprotein</keyword>
<keyword id="KW-0472">Membrane</keyword>
<keyword id="KW-0597">Phosphoprotein</keyword>
<keyword id="KW-0600">Photoreceptor protein</keyword>
<keyword id="KW-0675">Receptor</keyword>
<keyword id="KW-0681">Retinal protein</keyword>
<keyword id="KW-0716">Sensory transduction</keyword>
<keyword id="KW-0807">Transducer</keyword>
<keyword id="KW-0812">Transmembrane</keyword>
<keyword id="KW-1133">Transmembrane helix</keyword>
<keyword id="KW-0844">Vision</keyword>
<organism>
    <name type="scientific">Gekko gecko</name>
    <name type="common">Tokay gecko</name>
    <dbReference type="NCBI Taxonomy" id="36310"/>
    <lineage>
        <taxon>Eukaryota</taxon>
        <taxon>Metazoa</taxon>
        <taxon>Chordata</taxon>
        <taxon>Craniata</taxon>
        <taxon>Vertebrata</taxon>
        <taxon>Euteleostomi</taxon>
        <taxon>Lepidosauria</taxon>
        <taxon>Squamata</taxon>
        <taxon>Bifurcata</taxon>
        <taxon>Gekkota</taxon>
        <taxon>Gekkonidae</taxon>
        <taxon>Gekkoninae</taxon>
        <taxon>Gekko</taxon>
    </lineage>
</organism>
<evidence type="ECO:0000250" key="1"/>
<evidence type="ECO:0000255" key="2"/>
<evidence type="ECO:0000255" key="3">
    <source>
        <dbReference type="PROSITE-ProRule" id="PRU00521"/>
    </source>
</evidence>
<evidence type="ECO:0000256" key="4">
    <source>
        <dbReference type="SAM" id="MobiDB-lite"/>
    </source>
</evidence>
<reference key="1">
    <citation type="journal article" date="1992" name="Proc. Natl. Acad. Sci. U.S.A.">
        <title>Cone visual pigments are present in gecko rod cells.</title>
        <authorList>
            <person name="Kojima D."/>
            <person name="Okano T."/>
            <person name="Fukada Y."/>
            <person name="Shichida Y."/>
            <person name="Yoshizawa T."/>
            <person name="Ebrey T.G."/>
        </authorList>
    </citation>
    <scope>NUCLEOTIDE SEQUENCE [MRNA]</scope>
</reference>